<gene>
    <name evidence="1" type="primary">acpP</name>
    <name type="ordered locus">NTHI0243</name>
</gene>
<feature type="chain" id="PRO_1000066616" description="Acyl carrier protein">
    <location>
        <begin position="1"/>
        <end position="76"/>
    </location>
</feature>
<feature type="domain" description="Carrier" evidence="2">
    <location>
        <begin position="1"/>
        <end position="76"/>
    </location>
</feature>
<feature type="modified residue" description="O-(pantetheine 4'-phosphoryl)serine" evidence="2">
    <location>
        <position position="36"/>
    </location>
</feature>
<accession>Q4QP33</accession>
<keyword id="KW-0963">Cytoplasm</keyword>
<keyword id="KW-0275">Fatty acid biosynthesis</keyword>
<keyword id="KW-0276">Fatty acid metabolism</keyword>
<keyword id="KW-0444">Lipid biosynthesis</keyword>
<keyword id="KW-0443">Lipid metabolism</keyword>
<keyword id="KW-0596">Phosphopantetheine</keyword>
<keyword id="KW-0597">Phosphoprotein</keyword>
<name>ACP_HAEI8</name>
<comment type="function">
    <text evidence="1">Carrier of the growing fatty acid chain in fatty acid biosynthesis.</text>
</comment>
<comment type="pathway">
    <text evidence="1">Lipid metabolism; fatty acid biosynthesis.</text>
</comment>
<comment type="subcellular location">
    <subcellularLocation>
        <location evidence="1">Cytoplasm</location>
    </subcellularLocation>
</comment>
<comment type="PTM">
    <text evidence="1">4'-phosphopantetheine is transferred from CoA to a specific serine of apo-ACP by AcpS. This modification is essential for activity because fatty acids are bound in thioester linkage to the sulfhydryl of the prosthetic group.</text>
</comment>
<comment type="similarity">
    <text evidence="1">Belongs to the acyl carrier protein (ACP) family.</text>
</comment>
<proteinExistence type="inferred from homology"/>
<evidence type="ECO:0000255" key="1">
    <source>
        <dbReference type="HAMAP-Rule" id="MF_01217"/>
    </source>
</evidence>
<evidence type="ECO:0000255" key="2">
    <source>
        <dbReference type="PROSITE-ProRule" id="PRU00258"/>
    </source>
</evidence>
<protein>
    <recommendedName>
        <fullName evidence="1">Acyl carrier protein</fullName>
        <shortName evidence="1">ACP</shortName>
    </recommendedName>
</protein>
<sequence>MSIEERVKKIIVEQLGVKEEDVKPEASFVEDLGADSLDTVELVMALEEEFDIEIPDEEAEKITTVQSAIDYVQNNQ</sequence>
<reference key="1">
    <citation type="journal article" date="2005" name="J. Bacteriol.">
        <title>Genomic sequence of an otitis media isolate of nontypeable Haemophilus influenzae: comparative study with H. influenzae serotype d, strain KW20.</title>
        <authorList>
            <person name="Harrison A."/>
            <person name="Dyer D.W."/>
            <person name="Gillaspy A."/>
            <person name="Ray W.C."/>
            <person name="Mungur R."/>
            <person name="Carson M.B."/>
            <person name="Zhong H."/>
            <person name="Gipson J."/>
            <person name="Gipson M."/>
            <person name="Johnson L.S."/>
            <person name="Lewis L."/>
            <person name="Bakaletz L.O."/>
            <person name="Munson R.S. Jr."/>
        </authorList>
    </citation>
    <scope>NUCLEOTIDE SEQUENCE [LARGE SCALE GENOMIC DNA]</scope>
    <source>
        <strain>86-028NP</strain>
    </source>
</reference>
<organism>
    <name type="scientific">Haemophilus influenzae (strain 86-028NP)</name>
    <dbReference type="NCBI Taxonomy" id="281310"/>
    <lineage>
        <taxon>Bacteria</taxon>
        <taxon>Pseudomonadati</taxon>
        <taxon>Pseudomonadota</taxon>
        <taxon>Gammaproteobacteria</taxon>
        <taxon>Pasteurellales</taxon>
        <taxon>Pasteurellaceae</taxon>
        <taxon>Haemophilus</taxon>
    </lineage>
</organism>
<dbReference type="EMBL" id="CP000057">
    <property type="protein sequence ID" value="AAX87214.1"/>
    <property type="molecule type" value="Genomic_DNA"/>
</dbReference>
<dbReference type="RefSeq" id="WP_005544465.1">
    <property type="nucleotide sequence ID" value="NC_007146.2"/>
</dbReference>
<dbReference type="SMR" id="Q4QP33"/>
<dbReference type="GeneID" id="93296971"/>
<dbReference type="KEGG" id="hit:NTHI0243"/>
<dbReference type="HOGENOM" id="CLU_108696_5_1_6"/>
<dbReference type="UniPathway" id="UPA00094"/>
<dbReference type="Proteomes" id="UP000002525">
    <property type="component" value="Chromosome"/>
</dbReference>
<dbReference type="GO" id="GO:0005829">
    <property type="term" value="C:cytosol"/>
    <property type="evidence" value="ECO:0007669"/>
    <property type="project" value="TreeGrafter"/>
</dbReference>
<dbReference type="GO" id="GO:0016020">
    <property type="term" value="C:membrane"/>
    <property type="evidence" value="ECO:0007669"/>
    <property type="project" value="GOC"/>
</dbReference>
<dbReference type="GO" id="GO:0000035">
    <property type="term" value="F:acyl binding"/>
    <property type="evidence" value="ECO:0007669"/>
    <property type="project" value="TreeGrafter"/>
</dbReference>
<dbReference type="GO" id="GO:0000036">
    <property type="term" value="F:acyl carrier activity"/>
    <property type="evidence" value="ECO:0007669"/>
    <property type="project" value="UniProtKB-UniRule"/>
</dbReference>
<dbReference type="GO" id="GO:0009245">
    <property type="term" value="P:lipid A biosynthetic process"/>
    <property type="evidence" value="ECO:0007669"/>
    <property type="project" value="TreeGrafter"/>
</dbReference>
<dbReference type="FunFam" id="1.10.1200.10:FF:000001">
    <property type="entry name" value="Acyl carrier protein"/>
    <property type="match status" value="1"/>
</dbReference>
<dbReference type="Gene3D" id="1.10.1200.10">
    <property type="entry name" value="ACP-like"/>
    <property type="match status" value="1"/>
</dbReference>
<dbReference type="HAMAP" id="MF_01217">
    <property type="entry name" value="Acyl_carrier"/>
    <property type="match status" value="1"/>
</dbReference>
<dbReference type="InterPro" id="IPR003231">
    <property type="entry name" value="ACP"/>
</dbReference>
<dbReference type="InterPro" id="IPR036736">
    <property type="entry name" value="ACP-like_sf"/>
</dbReference>
<dbReference type="InterPro" id="IPR009081">
    <property type="entry name" value="PP-bd_ACP"/>
</dbReference>
<dbReference type="InterPro" id="IPR006162">
    <property type="entry name" value="Ppantetheine_attach_site"/>
</dbReference>
<dbReference type="NCBIfam" id="TIGR00517">
    <property type="entry name" value="acyl_carrier"/>
    <property type="match status" value="1"/>
</dbReference>
<dbReference type="NCBIfam" id="NF002148">
    <property type="entry name" value="PRK00982.1-2"/>
    <property type="match status" value="1"/>
</dbReference>
<dbReference type="NCBIfam" id="NF002149">
    <property type="entry name" value="PRK00982.1-3"/>
    <property type="match status" value="1"/>
</dbReference>
<dbReference type="NCBIfam" id="NF002150">
    <property type="entry name" value="PRK00982.1-4"/>
    <property type="match status" value="1"/>
</dbReference>
<dbReference type="NCBIfam" id="NF002151">
    <property type="entry name" value="PRK00982.1-5"/>
    <property type="match status" value="1"/>
</dbReference>
<dbReference type="PANTHER" id="PTHR20863">
    <property type="entry name" value="ACYL CARRIER PROTEIN"/>
    <property type="match status" value="1"/>
</dbReference>
<dbReference type="PANTHER" id="PTHR20863:SF76">
    <property type="entry name" value="CARRIER DOMAIN-CONTAINING PROTEIN"/>
    <property type="match status" value="1"/>
</dbReference>
<dbReference type="Pfam" id="PF00550">
    <property type="entry name" value="PP-binding"/>
    <property type="match status" value="1"/>
</dbReference>
<dbReference type="SUPFAM" id="SSF47336">
    <property type="entry name" value="ACP-like"/>
    <property type="match status" value="1"/>
</dbReference>
<dbReference type="PROSITE" id="PS50075">
    <property type="entry name" value="CARRIER"/>
    <property type="match status" value="1"/>
</dbReference>
<dbReference type="PROSITE" id="PS00012">
    <property type="entry name" value="PHOSPHOPANTETHEINE"/>
    <property type="match status" value="1"/>
</dbReference>